<reference key="1">
    <citation type="journal article" date="1998" name="J. Biol. Chem.">
        <title>Catabolism of phenylacetic acid in Escherichia coli. Characterization of a new aerobic hybrid pathway.</title>
        <authorList>
            <person name="Ferrandez A."/>
            <person name="Minambres B."/>
            <person name="Garcia B."/>
            <person name="Olivera E.R."/>
            <person name="Luengo J.M."/>
            <person name="Garcia J.L."/>
            <person name="Diaz E."/>
        </authorList>
    </citation>
    <scope>NUCLEOTIDE SEQUENCE [GENOMIC DNA]</scope>
    <scope>FUNCTION IN PHENYLACETATE CATABOLISM</scope>
    <scope>INDUCTION</scope>
    <source>
        <strain>W / ATCC 11105 / DSM 1900</strain>
    </source>
</reference>
<reference key="2">
    <citation type="journal article" date="1996" name="DNA Res.">
        <title>A 570-kb DNA sequence of the Escherichia coli K-12 genome corresponding to the 28.0-40.1 min region on the linkage map.</title>
        <authorList>
            <person name="Aiba H."/>
            <person name="Baba T."/>
            <person name="Fujita K."/>
            <person name="Hayashi K."/>
            <person name="Inada T."/>
            <person name="Isono K."/>
            <person name="Itoh T."/>
            <person name="Kasai H."/>
            <person name="Kashimoto K."/>
            <person name="Kimura S."/>
            <person name="Kitakawa M."/>
            <person name="Kitagawa M."/>
            <person name="Makino K."/>
            <person name="Miki T."/>
            <person name="Mizobuchi K."/>
            <person name="Mori H."/>
            <person name="Mori T."/>
            <person name="Motomura K."/>
            <person name="Nakade S."/>
            <person name="Nakamura Y."/>
            <person name="Nashimoto H."/>
            <person name="Nishio Y."/>
            <person name="Oshima T."/>
            <person name="Saito N."/>
            <person name="Sampei G."/>
            <person name="Seki Y."/>
            <person name="Sivasundaram S."/>
            <person name="Tagami H."/>
            <person name="Takeda J."/>
            <person name="Takemoto K."/>
            <person name="Takeuchi Y."/>
            <person name="Wada C."/>
            <person name="Yamamoto Y."/>
            <person name="Horiuchi T."/>
        </authorList>
    </citation>
    <scope>NUCLEOTIDE SEQUENCE [LARGE SCALE GENOMIC DNA]</scope>
    <source>
        <strain>K12 / W3110 / ATCC 27325 / DSM 5911</strain>
    </source>
</reference>
<reference key="3">
    <citation type="journal article" date="1997" name="Science">
        <title>The complete genome sequence of Escherichia coli K-12.</title>
        <authorList>
            <person name="Blattner F.R."/>
            <person name="Plunkett G. III"/>
            <person name="Bloch C.A."/>
            <person name="Perna N.T."/>
            <person name="Burland V."/>
            <person name="Riley M."/>
            <person name="Collado-Vides J."/>
            <person name="Glasner J.D."/>
            <person name="Rode C.K."/>
            <person name="Mayhew G.F."/>
            <person name="Gregor J."/>
            <person name="Davis N.W."/>
            <person name="Kirkpatrick H.A."/>
            <person name="Goeden M.A."/>
            <person name="Rose D.J."/>
            <person name="Mau B."/>
            <person name="Shao Y."/>
        </authorList>
    </citation>
    <scope>NUCLEOTIDE SEQUENCE [LARGE SCALE GENOMIC DNA]</scope>
    <source>
        <strain>K12 / MG1655 / ATCC 47076</strain>
    </source>
</reference>
<reference key="4">
    <citation type="journal article" date="2006" name="Mol. Syst. Biol.">
        <title>Highly accurate genome sequences of Escherichia coli K-12 strains MG1655 and W3110.</title>
        <authorList>
            <person name="Hayashi K."/>
            <person name="Morooka N."/>
            <person name="Yamamoto Y."/>
            <person name="Fujita K."/>
            <person name="Isono K."/>
            <person name="Choi S."/>
            <person name="Ohtsubo E."/>
            <person name="Baba T."/>
            <person name="Wanner B.L."/>
            <person name="Mori H."/>
            <person name="Horiuchi T."/>
        </authorList>
    </citation>
    <scope>NUCLEOTIDE SEQUENCE [LARGE SCALE GENOMIC DNA]</scope>
    <source>
        <strain>K12 / W3110 / ATCC 27325 / DSM 5911</strain>
    </source>
</reference>
<reference key="5">
    <citation type="journal article" date="2000" name="J. Biol. Chem.">
        <title>Transcriptional regulation of the divergent paa catabolic operons for phenylacetic acid degradation in Escherichia coli.</title>
        <authorList>
            <person name="Ferrandez A."/>
            <person name="Garcia J.L."/>
            <person name="Diaz E."/>
        </authorList>
    </citation>
    <scope>TRANSCRIPTIONAL REGULATION</scope>
</reference>
<reference key="6">
    <citation type="journal article" date="2003" name="Eur. J. Biochem.">
        <title>Functional genomics by NMR spectroscopy. Phenylacetate catabolism in Escherichia coli.</title>
        <authorList>
            <person name="Ismail W."/>
            <person name="El-Said Mohamed M."/>
            <person name="Wanner B.L."/>
            <person name="Datsenko K.A."/>
            <person name="Eisenreich W."/>
            <person name="Rohdich F."/>
            <person name="Bacher A."/>
            <person name="Fuchs G."/>
        </authorList>
    </citation>
    <scope>FUNCTION IN PHENYLACETATE CATABOLISM</scope>
    <scope>DISRUPTION PHENOTYPE</scope>
</reference>
<reference key="7">
    <citation type="journal article" date="2010" name="Proc. Natl. Acad. Sci. U.S.A.">
        <title>Bacterial phenylalanine and phenylacetate catabolic pathway revealed.</title>
        <authorList>
            <person name="Teufel R."/>
            <person name="Mascaraque V."/>
            <person name="Ismail W."/>
            <person name="Voss M."/>
            <person name="Perera J."/>
            <person name="Eisenreich W."/>
            <person name="Haehnel W."/>
            <person name="Fuchs G."/>
        </authorList>
    </citation>
    <scope>FUNCTION AS AN ISOMERASE</scope>
</reference>
<dbReference type="EC" id="5.3.3.18"/>
<dbReference type="EMBL" id="X97452">
    <property type="protein sequence ID" value="CAA66096.1"/>
    <property type="molecule type" value="Genomic_DNA"/>
</dbReference>
<dbReference type="EMBL" id="U00096">
    <property type="protein sequence ID" value="AAC74476.1"/>
    <property type="molecule type" value="Genomic_DNA"/>
</dbReference>
<dbReference type="EMBL" id="AP009048">
    <property type="protein sequence ID" value="BAA15000.1"/>
    <property type="molecule type" value="Genomic_DNA"/>
</dbReference>
<dbReference type="PIR" id="E64890">
    <property type="entry name" value="E64890"/>
</dbReference>
<dbReference type="RefSeq" id="NP_415912.1">
    <property type="nucleotide sequence ID" value="NC_000913.3"/>
</dbReference>
<dbReference type="RefSeq" id="WP_000969777.1">
    <property type="nucleotide sequence ID" value="NZ_STEB01000005.1"/>
</dbReference>
<dbReference type="RefSeq" id="WP_000969784.1">
    <property type="nucleotide sequence ID" value="NZ_SSZK01000012.1"/>
</dbReference>
<dbReference type="PDB" id="4FZW">
    <property type="method" value="X-ray"/>
    <property type="resolution" value="2.55 A"/>
    <property type="chains" value="C/D=1-262"/>
</dbReference>
<dbReference type="PDBsum" id="4FZW"/>
<dbReference type="SMR" id="P77467"/>
<dbReference type="BioGRID" id="4260969">
    <property type="interactions" value="377"/>
</dbReference>
<dbReference type="BioGRID" id="850622">
    <property type="interactions" value="7"/>
</dbReference>
<dbReference type="ComplexPortal" id="CPX-5681">
    <property type="entry name" value="Enoyl CoA hydratase/isomerase complex"/>
</dbReference>
<dbReference type="FunCoup" id="P77467">
    <property type="interactions" value="244"/>
</dbReference>
<dbReference type="IntAct" id="P77467">
    <property type="interactions" value="10"/>
</dbReference>
<dbReference type="STRING" id="511145.b1394"/>
<dbReference type="PaxDb" id="511145-b1394"/>
<dbReference type="EnsemblBacteria" id="AAC74476">
    <property type="protein sequence ID" value="AAC74476"/>
    <property type="gene ID" value="b1394"/>
</dbReference>
<dbReference type="GeneID" id="946263"/>
<dbReference type="KEGG" id="ecj:JW1389"/>
<dbReference type="KEGG" id="eco:b1394"/>
<dbReference type="KEGG" id="ecoc:C3026_08135"/>
<dbReference type="PATRIC" id="fig|1411691.4.peg.877"/>
<dbReference type="EchoBASE" id="EB3504"/>
<dbReference type="eggNOG" id="COG1024">
    <property type="taxonomic scope" value="Bacteria"/>
</dbReference>
<dbReference type="HOGENOM" id="CLU_009834_7_2_6"/>
<dbReference type="InParanoid" id="P77467"/>
<dbReference type="OMA" id="DPDLHWK"/>
<dbReference type="OrthoDB" id="9777711at2"/>
<dbReference type="PhylomeDB" id="P77467"/>
<dbReference type="BioCyc" id="EcoCyc:G6715-MONOMER"/>
<dbReference type="BRENDA" id="5.3.3.18">
    <property type="organism ID" value="2026"/>
</dbReference>
<dbReference type="UniPathway" id="UPA00930"/>
<dbReference type="EvolutionaryTrace" id="P77467"/>
<dbReference type="PRO" id="PR:P77467"/>
<dbReference type="Proteomes" id="UP000000625">
    <property type="component" value="Chromosome"/>
</dbReference>
<dbReference type="GO" id="GO:1902494">
    <property type="term" value="C:catalytic complex"/>
    <property type="evidence" value="ECO:0000353"/>
    <property type="project" value="ComplexPortal"/>
</dbReference>
<dbReference type="GO" id="GO:0042802">
    <property type="term" value="F:identical protein binding"/>
    <property type="evidence" value="ECO:0000314"/>
    <property type="project" value="EcoCyc"/>
</dbReference>
<dbReference type="GO" id="GO:0016853">
    <property type="term" value="F:isomerase activity"/>
    <property type="evidence" value="ECO:0000314"/>
    <property type="project" value="UniProtKB"/>
</dbReference>
<dbReference type="GO" id="GO:0016829">
    <property type="term" value="F:lyase activity"/>
    <property type="evidence" value="ECO:0007669"/>
    <property type="project" value="UniProtKB-KW"/>
</dbReference>
<dbReference type="GO" id="GO:0006635">
    <property type="term" value="P:fatty acid beta-oxidation"/>
    <property type="evidence" value="ECO:0000318"/>
    <property type="project" value="GO_Central"/>
</dbReference>
<dbReference type="GO" id="GO:0010124">
    <property type="term" value="P:phenylacetate catabolic process"/>
    <property type="evidence" value="ECO:0000315"/>
    <property type="project" value="EcoCyc"/>
</dbReference>
<dbReference type="CDD" id="cd06558">
    <property type="entry name" value="crotonase-like"/>
    <property type="match status" value="1"/>
</dbReference>
<dbReference type="FunFam" id="1.10.12.10:FF:000012">
    <property type="entry name" value="Phenylacetate degradation enoyl-CoA hydratase PaaB"/>
    <property type="match status" value="1"/>
</dbReference>
<dbReference type="FunFam" id="3.90.226.10:FF:000071">
    <property type="entry name" value="Putative enoyl-CoA hydratase PaaB"/>
    <property type="match status" value="1"/>
</dbReference>
<dbReference type="Gene3D" id="3.90.226.10">
    <property type="entry name" value="2-enoyl-CoA Hydratase, Chain A, domain 1"/>
    <property type="match status" value="1"/>
</dbReference>
<dbReference type="Gene3D" id="1.10.12.10">
    <property type="entry name" value="Lyase 2-enoyl-coa Hydratase, Chain A, domain 2"/>
    <property type="match status" value="1"/>
</dbReference>
<dbReference type="InterPro" id="IPR029045">
    <property type="entry name" value="ClpP/crotonase-like_dom_sf"/>
</dbReference>
<dbReference type="InterPro" id="IPR001753">
    <property type="entry name" value="Enoyl-CoA_hydra/iso"/>
</dbReference>
<dbReference type="InterPro" id="IPR014748">
    <property type="entry name" value="Enoyl-CoA_hydra_C"/>
</dbReference>
<dbReference type="InterPro" id="IPR011968">
    <property type="entry name" value="PaaB1"/>
</dbReference>
<dbReference type="NCBIfam" id="TIGR02280">
    <property type="entry name" value="PaaB1"/>
    <property type="match status" value="1"/>
</dbReference>
<dbReference type="PANTHER" id="PTHR43459:SF1">
    <property type="entry name" value="EG:BACN32G11.4 PROTEIN"/>
    <property type="match status" value="1"/>
</dbReference>
<dbReference type="PANTHER" id="PTHR43459">
    <property type="entry name" value="ENOYL-COA HYDRATASE"/>
    <property type="match status" value="1"/>
</dbReference>
<dbReference type="Pfam" id="PF00378">
    <property type="entry name" value="ECH_1"/>
    <property type="match status" value="1"/>
</dbReference>
<dbReference type="SUPFAM" id="SSF52096">
    <property type="entry name" value="ClpP/crotonase"/>
    <property type="match status" value="1"/>
</dbReference>
<comment type="function">
    <text evidence="2 3 4">Catalyzes the reversible conversion of the epoxide to 2-oxepin-2(3H)-ylideneacetyl-CoA (oxepin-CoA).</text>
</comment>
<comment type="catalytic activity">
    <reaction>
        <text>2-(1,2-epoxy-1,2-dihydrophenyl)acetyl-CoA = 2-oxepin-2(3H)-ylideneacetyl-CoA</text>
        <dbReference type="Rhea" id="RHEA:31843"/>
        <dbReference type="ChEBI" id="CHEBI:63252"/>
        <dbReference type="ChEBI" id="CHEBI:63458"/>
        <dbReference type="EC" id="5.3.3.18"/>
    </reaction>
</comment>
<comment type="pathway">
    <text>Aromatic compound metabolism; phenylacetate degradation.</text>
</comment>
<comment type="interaction">
    <interactant intactId="EBI-1118484">
        <id>P77467</id>
    </interactant>
    <interactant intactId="EBI-1115747">
        <id>P76082</id>
        <label>paaF</label>
    </interactant>
    <organismsDiffer>false</organismsDiffer>
    <experiments>3</experiments>
</comment>
<comment type="induction">
    <text evidence="1 4">Activated by cAMP receptor protein (CRP), integration host factor (IHF) and by phenylacetyl-coenzyme A (PA-CoA) that prevents PaaX from binding its target sequences. Inhibited by PaaX.</text>
</comment>
<comment type="disruption phenotype">
    <text evidence="2">Mutants accumulate ring-1,2-dihydroxy-1,2-dihydrophenylacetyl lactone and are unable to use phenylacetate as a carbon source.</text>
</comment>
<comment type="similarity">
    <text evidence="5">Belongs to the enoyl-CoA hydratase/isomerase family.</text>
</comment>
<evidence type="ECO:0000269" key="1">
    <source>
    </source>
</evidence>
<evidence type="ECO:0000269" key="2">
    <source>
    </source>
</evidence>
<evidence type="ECO:0000269" key="3">
    <source>
    </source>
</evidence>
<evidence type="ECO:0000269" key="4">
    <source>
    </source>
</evidence>
<evidence type="ECO:0000305" key="5"/>
<evidence type="ECO:0007829" key="6">
    <source>
        <dbReference type="PDB" id="4FZW"/>
    </source>
</evidence>
<accession>P77467</accession>
<accession>O53015</accession>
<proteinExistence type="evidence at protein level"/>
<organism>
    <name type="scientific">Escherichia coli (strain K12)</name>
    <dbReference type="NCBI Taxonomy" id="83333"/>
    <lineage>
        <taxon>Bacteria</taxon>
        <taxon>Pseudomonadati</taxon>
        <taxon>Pseudomonadota</taxon>
        <taxon>Gammaproteobacteria</taxon>
        <taxon>Enterobacterales</taxon>
        <taxon>Enterobacteriaceae</taxon>
        <taxon>Escherichia</taxon>
    </lineage>
</organism>
<sequence>MMEFILSHVEKGVMTLTLNRPERLNSFNDEMHAQLAECLKQVERDDTIRCLLLTGAGRGFCAGQDLNDRNVDPTGPAPDLGMSVERFYNPLVRRLAKLPKPVICAVNGVAAGAGATLALGGDIVIAARSAKFVMAFSKLGLIPDCGGTWLLPRVAGRARAMGLALLGNQLSAEQAHEWGMIWQVVDDETLADTAQQLARHLATQPTFGLGLIKQAINSAETNTLDTQLDLERDYQRLAGRSADYREGVSAFLAKRSPQFTGK</sequence>
<name>PAAG_ECOLI</name>
<keyword id="KW-0002">3D-structure</keyword>
<keyword id="KW-0413">Isomerase</keyword>
<keyword id="KW-0456">Lyase</keyword>
<keyword id="KW-1185">Reference proteome</keyword>
<gene>
    <name type="primary">paaG</name>
    <name type="synonym">ydbT</name>
    <name type="ordered locus">b1394</name>
    <name type="ordered locus">JW1389</name>
</gene>
<feature type="chain" id="PRO_0000109331" description="1,2-epoxyphenylacetyl-CoA isomerase">
    <location>
        <begin position="1"/>
        <end position="262"/>
    </location>
</feature>
<feature type="sequence variant" description="In strain: W.">
    <original>G</original>
    <variation>C</variation>
    <location>
        <position position="121"/>
    </location>
</feature>
<feature type="strand" evidence="6">
    <location>
        <begin position="5"/>
        <end position="10"/>
    </location>
</feature>
<feature type="strand" evidence="6">
    <location>
        <begin position="13"/>
        <end position="18"/>
    </location>
</feature>
<feature type="turn" evidence="6">
    <location>
        <begin position="21"/>
        <end position="24"/>
    </location>
</feature>
<feature type="helix" evidence="6">
    <location>
        <begin position="29"/>
        <end position="44"/>
    </location>
</feature>
<feature type="strand" evidence="6">
    <location>
        <begin position="50"/>
        <end position="58"/>
    </location>
</feature>
<feature type="helix" evidence="6">
    <location>
        <begin position="80"/>
        <end position="86"/>
    </location>
</feature>
<feature type="helix" evidence="6">
    <location>
        <begin position="88"/>
        <end position="97"/>
    </location>
</feature>
<feature type="strand" evidence="6">
    <location>
        <begin position="102"/>
        <end position="106"/>
    </location>
</feature>
<feature type="helix" evidence="6">
    <location>
        <begin position="113"/>
        <end position="119"/>
    </location>
</feature>
<feature type="strand" evidence="6">
    <location>
        <begin position="121"/>
        <end position="127"/>
    </location>
</feature>
<feature type="strand" evidence="6">
    <location>
        <begin position="131"/>
        <end position="133"/>
    </location>
</feature>
<feature type="helix" evidence="6">
    <location>
        <begin position="136"/>
        <end position="138"/>
    </location>
</feature>
<feature type="turn" evidence="6">
    <location>
        <begin position="144"/>
        <end position="146"/>
    </location>
</feature>
<feature type="helix" evidence="6">
    <location>
        <begin position="147"/>
        <end position="154"/>
    </location>
</feature>
<feature type="helix" evidence="6">
    <location>
        <begin position="157"/>
        <end position="166"/>
    </location>
</feature>
<feature type="helix" evidence="6">
    <location>
        <begin position="172"/>
        <end position="177"/>
    </location>
</feature>
<feature type="strand" evidence="6">
    <location>
        <begin position="180"/>
        <end position="185"/>
    </location>
</feature>
<feature type="helix" evidence="6">
    <location>
        <begin position="187"/>
        <end position="189"/>
    </location>
</feature>
<feature type="helix" evidence="6">
    <location>
        <begin position="190"/>
        <end position="201"/>
    </location>
</feature>
<feature type="helix" evidence="6">
    <location>
        <begin position="206"/>
        <end position="219"/>
    </location>
</feature>
<feature type="helix" evidence="6">
    <location>
        <begin position="224"/>
        <end position="238"/>
    </location>
</feature>
<feature type="helix" evidence="6">
    <location>
        <begin position="242"/>
        <end position="252"/>
    </location>
</feature>
<protein>
    <recommendedName>
        <fullName>1,2-epoxyphenylacetyl-CoA isomerase</fullName>
        <ecNumber>5.3.3.18</ecNumber>
    </recommendedName>
</protein>